<sequence>MFSNKKYIGLIDKYCEKKILDDSSTIKICYILIGILIGTNMITLIYNFIFWENYITCNQKDKTFYCPKDWVGYNNVCYYFGNDEKNYNNASNYCKQLNSTLTNNNTNLVNLTKTLNLTKTYNHESNYWVNYSLIKNESVLLRNSGYYKKQKHVSLLYICSK</sequence>
<evidence type="ECO:0000250" key="1">
    <source>
        <dbReference type="UniProtKB" id="Q65150"/>
    </source>
</evidence>
<evidence type="ECO:0000255" key="2"/>
<evidence type="ECO:0000269" key="3">
    <source>
    </source>
</evidence>
<evidence type="ECO:0000305" key="4"/>
<keyword id="KW-1015">Disulfide bond</keyword>
<keyword id="KW-0325">Glycoprotein</keyword>
<keyword id="KW-1038">Host endoplasmic reticulum</keyword>
<keyword id="KW-1043">Host membrane</keyword>
<keyword id="KW-0945">Host-virus interaction</keyword>
<keyword id="KW-0426">Late protein</keyword>
<keyword id="KW-0472">Membrane</keyword>
<keyword id="KW-1119">Modulation of host cell apoptosis by virus</keyword>
<keyword id="KW-0735">Signal-anchor</keyword>
<keyword id="KW-0812">Transmembrane</keyword>
<keyword id="KW-1133">Transmembrane helix</keyword>
<comment type="function">
    <text evidence="1 3">Down-regulates MHC-I expression by impairing the appropriate configuration or presentation into the plasma membrane of the latter (By similarity). Participates in viral hemadsorption, which may help viral spread (By similarity). Reduces the transactivating activity of host TP53, thus inhibiting apoptosis (By similarity). Non-essential for virus growth in swine macrophage cell cultures (PubMed:10573162).</text>
</comment>
<comment type="subunit">
    <text evidence="1">Homodimer.</text>
</comment>
<comment type="subcellular location">
    <subcellularLocation>
        <location evidence="1">Host endoplasmic reticulum membrane</location>
        <topology evidence="1">Single-pass type II membrane protein</topology>
    </subcellularLocation>
</comment>
<comment type="induction">
    <text evidence="3 4">Expressed in the early phase of the viral replicative cycle (Probable). Expressed in the late phase of the viral replicative cycle (PubMed:10573162).</text>
</comment>
<comment type="similarity">
    <text evidence="4">Belongs to the asfivirus lectin-like protein family.</text>
</comment>
<proteinExistence type="evidence at transcript level"/>
<feature type="chain" id="PRO_0000373540" description="Lectin-like protein EP153R">
    <location>
        <begin position="1"/>
        <end position="161"/>
    </location>
</feature>
<feature type="topological domain" description="Cytoplasmic" evidence="1">
    <location>
        <begin position="1"/>
        <end position="30"/>
    </location>
</feature>
<feature type="transmembrane region" description="Helical" evidence="2">
    <location>
        <begin position="31"/>
        <end position="51"/>
    </location>
</feature>
<feature type="topological domain" description="Extracellular" evidence="1">
    <location>
        <begin position="52"/>
        <end position="161"/>
    </location>
</feature>
<feature type="region of interest" description="Lectin-like">
    <location>
        <begin position="66"/>
        <end position="160"/>
    </location>
</feature>
<feature type="glycosylation site" description="N-linked (GlcNAc...) asparagine; by host" evidence="2">
    <location>
        <position position="89"/>
    </location>
</feature>
<feature type="glycosylation site" description="N-linked (GlcNAc...) asparagine; by host" evidence="2">
    <location>
        <position position="98"/>
    </location>
</feature>
<feature type="glycosylation site" description="N-linked (GlcNAc...) asparagine; by host" evidence="2">
    <location>
        <position position="104"/>
    </location>
</feature>
<feature type="glycosylation site" description="N-linked (GlcNAc...) asparagine; by host" evidence="2">
    <location>
        <position position="110"/>
    </location>
</feature>
<feature type="glycosylation site" description="N-linked (GlcNAc...) asparagine; by host" evidence="2">
    <location>
        <position position="116"/>
    </location>
</feature>
<feature type="glycosylation site" description="N-linked (GlcNAc...) asparagine; by host" evidence="2">
    <location>
        <position position="130"/>
    </location>
</feature>
<feature type="glycosylation site" description="N-linked (GlcNAc...) asparagine; by host" evidence="2">
    <location>
        <position position="136"/>
    </location>
</feature>
<feature type="disulfide bond" evidence="1">
    <location>
        <begin position="66"/>
        <end position="77"/>
    </location>
</feature>
<feature type="disulfide bond" evidence="1">
    <location>
        <begin position="94"/>
        <end position="159"/>
    </location>
</feature>
<organism>
    <name type="scientific">African swine fever virus (isolate Tick/Malawi/Lil 20-1/1983)</name>
    <name type="common">ASFV</name>
    <dbReference type="NCBI Taxonomy" id="10500"/>
    <lineage>
        <taxon>Viruses</taxon>
        <taxon>Varidnaviria</taxon>
        <taxon>Bamfordvirae</taxon>
        <taxon>Nucleocytoviricota</taxon>
        <taxon>Pokkesviricetes</taxon>
        <taxon>Asfuvirales</taxon>
        <taxon>Asfarviridae</taxon>
        <taxon>Asfivirus</taxon>
        <taxon>African swine fever virus</taxon>
    </lineage>
</organism>
<name>EP153_ASFM2</name>
<dbReference type="EMBL" id="AY261361">
    <property type="status" value="NOT_ANNOTATED_CDS"/>
    <property type="molecule type" value="Genomic_DNA"/>
</dbReference>
<dbReference type="SMR" id="P0CA64"/>
<dbReference type="Proteomes" id="UP000000860">
    <property type="component" value="Segment"/>
</dbReference>
<dbReference type="GO" id="GO:0044167">
    <property type="term" value="C:host cell endoplasmic reticulum membrane"/>
    <property type="evidence" value="ECO:0007669"/>
    <property type="project" value="UniProtKB-SubCell"/>
</dbReference>
<dbReference type="GO" id="GO:0016020">
    <property type="term" value="C:membrane"/>
    <property type="evidence" value="ECO:0007669"/>
    <property type="project" value="UniProtKB-KW"/>
</dbReference>
<dbReference type="GO" id="GO:0052150">
    <property type="term" value="P:symbiont-mediated perturbation of host apoptosis"/>
    <property type="evidence" value="ECO:0007669"/>
    <property type="project" value="UniProtKB-KW"/>
</dbReference>
<dbReference type="Gene3D" id="3.10.100.10">
    <property type="entry name" value="Mannose-Binding Protein A, subunit A"/>
    <property type="match status" value="1"/>
</dbReference>
<dbReference type="InterPro" id="IPR016186">
    <property type="entry name" value="C-type_lectin-like/link_sf"/>
</dbReference>
<dbReference type="InterPro" id="IPR050828">
    <property type="entry name" value="C-type_lectin/matrix_domain"/>
</dbReference>
<dbReference type="InterPro" id="IPR016187">
    <property type="entry name" value="CTDL_fold"/>
</dbReference>
<dbReference type="PANTHER" id="PTHR45710">
    <property type="entry name" value="C-TYPE LECTIN DOMAIN-CONTAINING PROTEIN 180"/>
    <property type="match status" value="1"/>
</dbReference>
<dbReference type="PANTHER" id="PTHR45710:SF26">
    <property type="entry name" value="RH26557P"/>
    <property type="match status" value="1"/>
</dbReference>
<dbReference type="Pfam" id="PF05473">
    <property type="entry name" value="UL45"/>
    <property type="match status" value="1"/>
</dbReference>
<dbReference type="SUPFAM" id="SSF56436">
    <property type="entry name" value="C-type lectin-like"/>
    <property type="match status" value="1"/>
</dbReference>
<accession>P0CA64</accession>
<organismHost>
    <name type="scientific">Ornithodoros</name>
    <name type="common">relapsing fever ticks</name>
    <dbReference type="NCBI Taxonomy" id="6937"/>
</organismHost>
<organismHost>
    <name type="scientific">Phacochoerus aethiopicus</name>
    <name type="common">Warthog</name>
    <dbReference type="NCBI Taxonomy" id="85517"/>
</organismHost>
<organismHost>
    <name type="scientific">Phacochoerus africanus</name>
    <name type="common">Warthog</name>
    <dbReference type="NCBI Taxonomy" id="41426"/>
</organismHost>
<organismHost>
    <name type="scientific">Potamochoerus larvatus</name>
    <name type="common">Bushpig</name>
    <dbReference type="NCBI Taxonomy" id="273792"/>
</organismHost>
<organismHost>
    <name type="scientific">Sus scrofa</name>
    <name type="common">Pig</name>
    <dbReference type="NCBI Taxonomy" id="9823"/>
</organismHost>
<protein>
    <recommendedName>
        <fullName>Lectin-like protein EP153R</fullName>
        <shortName>pEP153R</shortName>
    </recommendedName>
</protein>
<gene>
    <name type="ordered locus">Mal-065</name>
</gene>
<reference key="1">
    <citation type="submission" date="2003-03" db="EMBL/GenBank/DDBJ databases">
        <title>African swine fever virus genomes.</title>
        <authorList>
            <person name="Kutish G.F."/>
            <person name="Rock D.L."/>
        </authorList>
    </citation>
    <scope>NUCLEOTIDE SEQUENCE [LARGE SCALE GENOMIC DNA]</scope>
</reference>
<reference key="2">
    <citation type="journal article" date="1999" name="J. Gen. Virol.">
        <title>An African swine fever virus ORF with similarity to C-type lectins is non-essential for growth in swine macrophages in vitro and for virus virulence in domestic swine.</title>
        <authorList>
            <person name="Neilan J.G."/>
            <person name="Borca M.V."/>
            <person name="Lu Z."/>
            <person name="Kutish G.F."/>
            <person name="Kleiboeker S.B."/>
            <person name="Carrillo C."/>
            <person name="Zsak L."/>
            <person name="Rock D.L."/>
        </authorList>
    </citation>
    <scope>INDUCTION</scope>
    <scope>FUNCTION</scope>
</reference>